<comment type="function">
    <text evidence="2">Required for the accumulation of coenzyme A in the mitochondrial matrix.</text>
</comment>
<comment type="subcellular location">
    <subcellularLocation>
        <location evidence="2 3">Mitochondrion inner membrane</location>
        <topology evidence="2">Multi-pass membrane protein</topology>
    </subcellularLocation>
</comment>
<comment type="similarity">
    <text evidence="4">Belongs to the mitochondrial carrier (TC 2.A.29) family.</text>
</comment>
<evidence type="ECO:0000255" key="1"/>
<evidence type="ECO:0000269" key="2">
    <source>
    </source>
</evidence>
<evidence type="ECO:0000269" key="3">
    <source>
    </source>
</evidence>
<evidence type="ECO:0000305" key="4"/>
<keyword id="KW-0472">Membrane</keyword>
<keyword id="KW-0496">Mitochondrion</keyword>
<keyword id="KW-0999">Mitochondrion inner membrane</keyword>
<keyword id="KW-1185">Reference proteome</keyword>
<keyword id="KW-0677">Repeat</keyword>
<keyword id="KW-0812">Transmembrane</keyword>
<keyword id="KW-1133">Transmembrane helix</keyword>
<keyword id="KW-0813">Transport</keyword>
<organism>
    <name type="scientific">Saccharomyces cerevisiae (strain ATCC 204508 / S288c)</name>
    <name type="common">Baker's yeast</name>
    <dbReference type="NCBI Taxonomy" id="559292"/>
    <lineage>
        <taxon>Eukaryota</taxon>
        <taxon>Fungi</taxon>
        <taxon>Dikarya</taxon>
        <taxon>Ascomycota</taxon>
        <taxon>Saccharomycotina</taxon>
        <taxon>Saccharomycetes</taxon>
        <taxon>Saccharomycetales</taxon>
        <taxon>Saccharomycetaceae</taxon>
        <taxon>Saccharomyces</taxon>
    </lineage>
</organism>
<sequence>MTRDSPDSNDSYKHINKNTTQKTSFDRNSFDYIVRSGLAGGISGSCAKTLIAPLDRIKILFQTSNPHYTKYTGSLIGLVEAAKHIWINDGVRGFFQGHSATLLRIFPYAAVKFVAYEQIRNTLIPSKEFESHWRRLVSGSLAGLCSVFITYPLDLVRVRLAYETEHKRVKLGRIIKKIYKEPASATLIKNDYIPNWFCHWCNFYRGYVPTVLGMIPYAGVSFFAHDLLHDVLKSPFFAPYSVLELSEDDELERVQKKQRRPLRTWAELISGGLAGMASQTAAYPFEIIRRRLQVSALSPKTMYDHKFQSISEIAHIIFKERGVRGFFVGLSIGYIKVTPMVACSFFVYERMKWNFGI</sequence>
<name>LEU5_YEAST</name>
<feature type="chain" id="PRO_0000090683" description="Mitochondrial carrier protein LEU5">
    <location>
        <begin position="1"/>
        <end position="357"/>
    </location>
</feature>
<feature type="transmembrane region" description="Helical; Name=1" evidence="1">
    <location>
        <begin position="31"/>
        <end position="47"/>
    </location>
</feature>
<feature type="transmembrane region" description="Helical; Name=2" evidence="1">
    <location>
        <begin position="103"/>
        <end position="119"/>
    </location>
</feature>
<feature type="transmembrane region" description="Helical; Name=3" evidence="1">
    <location>
        <begin position="136"/>
        <end position="153"/>
    </location>
</feature>
<feature type="transmembrane region" description="Helical; Name=4" evidence="1">
    <location>
        <begin position="208"/>
        <end position="228"/>
    </location>
</feature>
<feature type="transmembrane region" description="Helical; Name=5" evidence="1">
    <location>
        <begin position="269"/>
        <end position="285"/>
    </location>
</feature>
<feature type="transmembrane region" description="Helical; Name=6" evidence="1">
    <location>
        <begin position="325"/>
        <end position="347"/>
    </location>
</feature>
<feature type="repeat" description="Solcar 1">
    <location>
        <begin position="31"/>
        <end position="122"/>
    </location>
</feature>
<feature type="repeat" description="Solcar 2">
    <location>
        <begin position="130"/>
        <end position="231"/>
    </location>
</feature>
<feature type="repeat" description="Solcar 3">
    <location>
        <begin position="262"/>
        <end position="354"/>
    </location>
</feature>
<gene>
    <name type="primary">LEU5</name>
    <name type="ordered locus">YHR002W</name>
</gene>
<dbReference type="EMBL" id="U10555">
    <property type="protein sequence ID" value="AAB68424.1"/>
    <property type="molecule type" value="Genomic_DNA"/>
</dbReference>
<dbReference type="EMBL" id="BK006934">
    <property type="protein sequence ID" value="DAA06689.1"/>
    <property type="molecule type" value="Genomic_DNA"/>
</dbReference>
<dbReference type="PIR" id="S46795">
    <property type="entry name" value="S46795"/>
</dbReference>
<dbReference type="RefSeq" id="NP_011865.1">
    <property type="nucleotide sequence ID" value="NM_001179132.1"/>
</dbReference>
<dbReference type="SMR" id="P38702"/>
<dbReference type="BioGRID" id="36427">
    <property type="interactions" value="123"/>
</dbReference>
<dbReference type="DIP" id="DIP-8164N"/>
<dbReference type="FunCoup" id="P38702">
    <property type="interactions" value="291"/>
</dbReference>
<dbReference type="STRING" id="4932.YHR002W"/>
<dbReference type="TCDB" id="2.A.29.12.4">
    <property type="family name" value="the mitochondrial carrier (mc) family"/>
</dbReference>
<dbReference type="PaxDb" id="4932-YHR002W"/>
<dbReference type="PeptideAtlas" id="P38702"/>
<dbReference type="EnsemblFungi" id="YHR002W_mRNA">
    <property type="protein sequence ID" value="YHR002W"/>
    <property type="gene ID" value="YHR002W"/>
</dbReference>
<dbReference type="GeneID" id="856391"/>
<dbReference type="KEGG" id="sce:YHR002W"/>
<dbReference type="AGR" id="SGD:S000001044"/>
<dbReference type="SGD" id="S000001044">
    <property type="gene designation" value="LEU5"/>
</dbReference>
<dbReference type="VEuPathDB" id="FungiDB:YHR002W"/>
<dbReference type="eggNOG" id="KOG0752">
    <property type="taxonomic scope" value="Eukaryota"/>
</dbReference>
<dbReference type="GeneTree" id="ENSGT00940000157520"/>
<dbReference type="HOGENOM" id="CLU_015166_10_0_1"/>
<dbReference type="InParanoid" id="P38702"/>
<dbReference type="OMA" id="VYERMKW"/>
<dbReference type="OrthoDB" id="270584at2759"/>
<dbReference type="BioCyc" id="YEAST:G3O-31067-MONOMER"/>
<dbReference type="Reactome" id="R-SCE-199220">
    <property type="pathway name" value="Vitamin B5 (pantothenate) metabolism"/>
</dbReference>
<dbReference type="BioGRID-ORCS" id="856391">
    <property type="hits" value="2 hits in 10 CRISPR screens"/>
</dbReference>
<dbReference type="PRO" id="PR:P38702"/>
<dbReference type="Proteomes" id="UP000002311">
    <property type="component" value="Chromosome VIII"/>
</dbReference>
<dbReference type="RNAct" id="P38702">
    <property type="molecule type" value="protein"/>
</dbReference>
<dbReference type="GO" id="GO:0005743">
    <property type="term" value="C:mitochondrial inner membrane"/>
    <property type="evidence" value="ECO:0000314"/>
    <property type="project" value="SGD"/>
</dbReference>
<dbReference type="GO" id="GO:0005739">
    <property type="term" value="C:mitochondrion"/>
    <property type="evidence" value="ECO:0007005"/>
    <property type="project" value="SGD"/>
</dbReference>
<dbReference type="GO" id="GO:0015228">
    <property type="term" value="F:coenzyme A transmembrane transporter activity"/>
    <property type="evidence" value="ECO:0000315"/>
    <property type="project" value="SGD"/>
</dbReference>
<dbReference type="GO" id="GO:0015880">
    <property type="term" value="P:coenzyme A transport"/>
    <property type="evidence" value="ECO:0000315"/>
    <property type="project" value="SGD"/>
</dbReference>
<dbReference type="GO" id="GO:1990559">
    <property type="term" value="P:mitochondrial coenzyme A transmembrane transport"/>
    <property type="evidence" value="ECO:0000318"/>
    <property type="project" value="GO_Central"/>
</dbReference>
<dbReference type="FunFam" id="1.50.40.10:FF:000151">
    <property type="entry name" value="LEU5p Mitochondrial carrier protein"/>
    <property type="match status" value="1"/>
</dbReference>
<dbReference type="Gene3D" id="1.50.40.10">
    <property type="entry name" value="Mitochondrial carrier domain"/>
    <property type="match status" value="1"/>
</dbReference>
<dbReference type="InterPro" id="IPR002167">
    <property type="entry name" value="GDC-like"/>
</dbReference>
<dbReference type="InterPro" id="IPR002067">
    <property type="entry name" value="Mit_carrier"/>
</dbReference>
<dbReference type="InterPro" id="IPR018108">
    <property type="entry name" value="Mitochondrial_sb/sol_carrier"/>
</dbReference>
<dbReference type="InterPro" id="IPR023395">
    <property type="entry name" value="Mt_carrier_dom_sf"/>
</dbReference>
<dbReference type="PANTHER" id="PTHR24089">
    <property type="entry name" value="SOLUTE CARRIER FAMILY 25"/>
    <property type="match status" value="1"/>
</dbReference>
<dbReference type="Pfam" id="PF00153">
    <property type="entry name" value="Mito_carr"/>
    <property type="match status" value="3"/>
</dbReference>
<dbReference type="PRINTS" id="PR00928">
    <property type="entry name" value="GRAVESDC"/>
</dbReference>
<dbReference type="PRINTS" id="PR00926">
    <property type="entry name" value="MITOCARRIER"/>
</dbReference>
<dbReference type="SUPFAM" id="SSF103506">
    <property type="entry name" value="Mitochondrial carrier"/>
    <property type="match status" value="1"/>
</dbReference>
<dbReference type="PROSITE" id="PS50920">
    <property type="entry name" value="SOLCAR"/>
    <property type="match status" value="3"/>
</dbReference>
<protein>
    <recommendedName>
        <fullName>Mitochondrial carrier protein LEU5</fullName>
    </recommendedName>
</protein>
<proteinExistence type="evidence at protein level"/>
<accession>P38702</accession>
<accession>D3DKR9</accession>
<reference key="1">
    <citation type="journal article" date="1994" name="Science">
        <title>Complete nucleotide sequence of Saccharomyces cerevisiae chromosome VIII.</title>
        <authorList>
            <person name="Johnston M."/>
            <person name="Andrews S."/>
            <person name="Brinkman R."/>
            <person name="Cooper J."/>
            <person name="Ding H."/>
            <person name="Dover J."/>
            <person name="Du Z."/>
            <person name="Favello A."/>
            <person name="Fulton L."/>
            <person name="Gattung S."/>
            <person name="Geisel C."/>
            <person name="Kirsten J."/>
            <person name="Kucaba T."/>
            <person name="Hillier L.W."/>
            <person name="Jier M."/>
            <person name="Johnston L."/>
            <person name="Langston Y."/>
            <person name="Latreille P."/>
            <person name="Louis E.J."/>
            <person name="Macri C."/>
            <person name="Mardis E."/>
            <person name="Menezes S."/>
            <person name="Mouser L."/>
            <person name="Nhan M."/>
            <person name="Rifkin L."/>
            <person name="Riles L."/>
            <person name="St Peter H."/>
            <person name="Trevaskis E."/>
            <person name="Vaughan K."/>
            <person name="Vignati D."/>
            <person name="Wilcox L."/>
            <person name="Wohldman P."/>
            <person name="Waterston R."/>
            <person name="Wilson R."/>
            <person name="Vaudin M."/>
        </authorList>
    </citation>
    <scope>NUCLEOTIDE SEQUENCE [LARGE SCALE GENOMIC DNA]</scope>
    <source>
        <strain>ATCC 204508 / S288c</strain>
    </source>
</reference>
<reference key="2">
    <citation type="journal article" date="2014" name="G3 (Bethesda)">
        <title>The reference genome sequence of Saccharomyces cerevisiae: Then and now.</title>
        <authorList>
            <person name="Engel S.R."/>
            <person name="Dietrich F.S."/>
            <person name="Fisk D.G."/>
            <person name="Binkley G."/>
            <person name="Balakrishnan R."/>
            <person name="Costanzo M.C."/>
            <person name="Dwight S.S."/>
            <person name="Hitz B.C."/>
            <person name="Karra K."/>
            <person name="Nash R.S."/>
            <person name="Weng S."/>
            <person name="Wong E.D."/>
            <person name="Lloyd P."/>
            <person name="Skrzypek M.S."/>
            <person name="Miyasato S.R."/>
            <person name="Simison M."/>
            <person name="Cherry J.M."/>
        </authorList>
    </citation>
    <scope>GENOME REANNOTATION</scope>
    <source>
        <strain>ATCC 204508 / S288c</strain>
    </source>
</reference>
<reference key="3">
    <citation type="journal article" date="2001" name="Mol. Cell. Biol.">
        <title>The yeast mitochondrial carrier Leu5p and its human homologue Graves' disease protein are required for accumulation of coenzyme A in the matrix.</title>
        <authorList>
            <person name="Prohl C."/>
            <person name="Pelzer W."/>
            <person name="Diekert K."/>
            <person name="Kmita H."/>
            <person name="Bedekovics T."/>
            <person name="Kispal G."/>
            <person name="Lill R."/>
        </authorList>
    </citation>
    <scope>FUNCTION</scope>
    <scope>SUBCELLULAR LOCATION</scope>
</reference>
<reference key="4">
    <citation type="journal article" date="2006" name="J. Proteome Res.">
        <title>Toward the complete yeast mitochondrial proteome: multidimensional separation techniques for mitochondrial proteomics.</title>
        <authorList>
            <person name="Reinders J."/>
            <person name="Zahedi R.P."/>
            <person name="Pfanner N."/>
            <person name="Meisinger C."/>
            <person name="Sickmann A."/>
        </authorList>
    </citation>
    <scope>SUBCELLULAR LOCATION [LARGE SCALE ANALYSIS]</scope>
    <scope>IDENTIFICATION BY MASS SPECTROMETRY</scope>
</reference>